<sequence>MKEVVVVDCIRTPMGRSKGGIFRNVRAETLSAHLMSKLIERNPNLDPNEIEDIIWGCVQQTKEQGFNIARNAQLLTDIPRSVAAVTVNRLCGSSMQALHDATSGIMSGRGDVYMIGGVEHMGHVPMDFNIDFHPGIAKTAARASGSMGMTAELLGRQNGISREMQDAFGARSHQKAHAAAVEGRWNEIVATEGHDADGILKLIDADETIRPDSTTESMSGLRPVFDPVNGTVTAGTSSALSDGASAMLIMSADKAKALGLTPRAKIRAMAVAGCDAAIMGFGPVPATQKALKRAGMTMADIELAEFNEAFAAQALSCIKQLGWLDTYEDKVNLNGGAIALGHPLGCSGSRISTTLINLMEANDKSIGLATMCIGLGQGIATVFERV</sequence>
<comment type="function">
    <text evidence="1">Catalyzes the final step of fatty acid oxidation in which acetyl-CoA is released and the CoA ester of a fatty acid two carbons shorter is formed.</text>
</comment>
<comment type="catalytic activity">
    <reaction evidence="1">
        <text>an acyl-CoA + acetyl-CoA = a 3-oxoacyl-CoA + CoA</text>
        <dbReference type="Rhea" id="RHEA:21564"/>
        <dbReference type="ChEBI" id="CHEBI:57287"/>
        <dbReference type="ChEBI" id="CHEBI:57288"/>
        <dbReference type="ChEBI" id="CHEBI:58342"/>
        <dbReference type="ChEBI" id="CHEBI:90726"/>
        <dbReference type="EC" id="2.3.1.16"/>
    </reaction>
</comment>
<comment type="pathway">
    <text evidence="1">Lipid metabolism; fatty acid beta-oxidation.</text>
</comment>
<comment type="subunit">
    <text evidence="1">Heterotetramer of two alpha chains (FadB) and two beta chains (FadA).</text>
</comment>
<comment type="subcellular location">
    <subcellularLocation>
        <location evidence="1">Cytoplasm</location>
    </subcellularLocation>
</comment>
<comment type="similarity">
    <text evidence="1">Belongs to the thiolase-like superfamily. Thiolase family.</text>
</comment>
<protein>
    <recommendedName>
        <fullName evidence="1">3-ketoacyl-CoA thiolase</fullName>
        <ecNumber evidence="1">2.3.1.16</ecNumber>
    </recommendedName>
    <alternativeName>
        <fullName evidence="1">Acetyl-CoA acyltransferase</fullName>
    </alternativeName>
    <alternativeName>
        <fullName evidence="1">Beta-ketothiolase</fullName>
    </alternativeName>
    <alternativeName>
        <fullName evidence="1">Fatty acid oxidation complex subunit beta</fullName>
    </alternativeName>
</protein>
<name>FADA_PSEA6</name>
<feature type="chain" id="PRO_0000292893" description="3-ketoacyl-CoA thiolase">
    <location>
        <begin position="1"/>
        <end position="386"/>
    </location>
</feature>
<feature type="active site" description="Acyl-thioester intermediate" evidence="1">
    <location>
        <position position="91"/>
    </location>
</feature>
<feature type="active site" description="Proton acceptor" evidence="1">
    <location>
        <position position="342"/>
    </location>
</feature>
<feature type="active site" description="Proton acceptor" evidence="1">
    <location>
        <position position="372"/>
    </location>
</feature>
<keyword id="KW-0012">Acyltransferase</keyword>
<keyword id="KW-0963">Cytoplasm</keyword>
<keyword id="KW-0276">Fatty acid metabolism</keyword>
<keyword id="KW-0442">Lipid degradation</keyword>
<keyword id="KW-0443">Lipid metabolism</keyword>
<keyword id="KW-0808">Transferase</keyword>
<proteinExistence type="inferred from homology"/>
<accession>Q15ZF4</accession>
<reference key="1">
    <citation type="submission" date="2006-06" db="EMBL/GenBank/DDBJ databases">
        <title>Complete sequence of Pseudoalteromonas atlantica T6c.</title>
        <authorList>
            <consortium name="US DOE Joint Genome Institute"/>
            <person name="Copeland A."/>
            <person name="Lucas S."/>
            <person name="Lapidus A."/>
            <person name="Barry K."/>
            <person name="Detter J.C."/>
            <person name="Glavina del Rio T."/>
            <person name="Hammon N."/>
            <person name="Israni S."/>
            <person name="Dalin E."/>
            <person name="Tice H."/>
            <person name="Pitluck S."/>
            <person name="Saunders E."/>
            <person name="Brettin T."/>
            <person name="Bruce D."/>
            <person name="Han C."/>
            <person name="Tapia R."/>
            <person name="Gilna P."/>
            <person name="Schmutz J."/>
            <person name="Larimer F."/>
            <person name="Land M."/>
            <person name="Hauser L."/>
            <person name="Kyrpides N."/>
            <person name="Kim E."/>
            <person name="Karls A.C."/>
            <person name="Bartlett D."/>
            <person name="Higgins B.P."/>
            <person name="Richardson P."/>
        </authorList>
    </citation>
    <scope>NUCLEOTIDE SEQUENCE [LARGE SCALE GENOMIC DNA]</scope>
    <source>
        <strain>T6c / ATCC BAA-1087</strain>
    </source>
</reference>
<evidence type="ECO:0000255" key="1">
    <source>
        <dbReference type="HAMAP-Rule" id="MF_01620"/>
    </source>
</evidence>
<gene>
    <name evidence="1" type="primary">fadA</name>
    <name type="ordered locus">Patl_0202</name>
</gene>
<dbReference type="EC" id="2.3.1.16" evidence="1"/>
<dbReference type="EMBL" id="CP000388">
    <property type="protein sequence ID" value="ABG38734.1"/>
    <property type="molecule type" value="Genomic_DNA"/>
</dbReference>
<dbReference type="RefSeq" id="WP_011573138.1">
    <property type="nucleotide sequence ID" value="NC_008228.1"/>
</dbReference>
<dbReference type="SMR" id="Q15ZF4"/>
<dbReference type="STRING" id="342610.Patl_0202"/>
<dbReference type="KEGG" id="pat:Patl_0202"/>
<dbReference type="eggNOG" id="COG0183">
    <property type="taxonomic scope" value="Bacteria"/>
</dbReference>
<dbReference type="HOGENOM" id="CLU_031026_2_2_6"/>
<dbReference type="OrthoDB" id="8951704at2"/>
<dbReference type="UniPathway" id="UPA00659"/>
<dbReference type="Proteomes" id="UP000001981">
    <property type="component" value="Chromosome"/>
</dbReference>
<dbReference type="GO" id="GO:0005737">
    <property type="term" value="C:cytoplasm"/>
    <property type="evidence" value="ECO:0007669"/>
    <property type="project" value="UniProtKB-SubCell"/>
</dbReference>
<dbReference type="GO" id="GO:0003988">
    <property type="term" value="F:acetyl-CoA C-acyltransferase activity"/>
    <property type="evidence" value="ECO:0007669"/>
    <property type="project" value="UniProtKB-UniRule"/>
</dbReference>
<dbReference type="GO" id="GO:0006635">
    <property type="term" value="P:fatty acid beta-oxidation"/>
    <property type="evidence" value="ECO:0007669"/>
    <property type="project" value="UniProtKB-UniRule"/>
</dbReference>
<dbReference type="GO" id="GO:0010124">
    <property type="term" value="P:phenylacetate catabolic process"/>
    <property type="evidence" value="ECO:0007669"/>
    <property type="project" value="TreeGrafter"/>
</dbReference>
<dbReference type="CDD" id="cd00751">
    <property type="entry name" value="thiolase"/>
    <property type="match status" value="1"/>
</dbReference>
<dbReference type="FunFam" id="3.40.47.10:FF:000010">
    <property type="entry name" value="Acetyl-CoA acetyltransferase (Thiolase)"/>
    <property type="match status" value="1"/>
</dbReference>
<dbReference type="Gene3D" id="3.40.47.10">
    <property type="match status" value="2"/>
</dbReference>
<dbReference type="HAMAP" id="MF_01620">
    <property type="entry name" value="FadA"/>
    <property type="match status" value="1"/>
</dbReference>
<dbReference type="InterPro" id="IPR012805">
    <property type="entry name" value="FadA"/>
</dbReference>
<dbReference type="InterPro" id="IPR002155">
    <property type="entry name" value="Thiolase"/>
</dbReference>
<dbReference type="InterPro" id="IPR016039">
    <property type="entry name" value="Thiolase-like"/>
</dbReference>
<dbReference type="InterPro" id="IPR050215">
    <property type="entry name" value="Thiolase-like_sf_Thiolase"/>
</dbReference>
<dbReference type="InterPro" id="IPR020615">
    <property type="entry name" value="Thiolase_acyl_enz_int_AS"/>
</dbReference>
<dbReference type="InterPro" id="IPR020610">
    <property type="entry name" value="Thiolase_AS"/>
</dbReference>
<dbReference type="InterPro" id="IPR020617">
    <property type="entry name" value="Thiolase_C"/>
</dbReference>
<dbReference type="InterPro" id="IPR020613">
    <property type="entry name" value="Thiolase_CS"/>
</dbReference>
<dbReference type="InterPro" id="IPR020616">
    <property type="entry name" value="Thiolase_N"/>
</dbReference>
<dbReference type="NCBIfam" id="TIGR01930">
    <property type="entry name" value="AcCoA-C-Actrans"/>
    <property type="match status" value="1"/>
</dbReference>
<dbReference type="NCBIfam" id="TIGR02445">
    <property type="entry name" value="fadA"/>
    <property type="match status" value="1"/>
</dbReference>
<dbReference type="NCBIfam" id="NF006510">
    <property type="entry name" value="PRK08947.1"/>
    <property type="match status" value="1"/>
</dbReference>
<dbReference type="PANTHER" id="PTHR43853:SF11">
    <property type="entry name" value="3-KETOACYL-COA THIOLASE FADA"/>
    <property type="match status" value="1"/>
</dbReference>
<dbReference type="PANTHER" id="PTHR43853">
    <property type="entry name" value="3-KETOACYL-COA THIOLASE, PEROXISOMAL"/>
    <property type="match status" value="1"/>
</dbReference>
<dbReference type="Pfam" id="PF02803">
    <property type="entry name" value="Thiolase_C"/>
    <property type="match status" value="1"/>
</dbReference>
<dbReference type="Pfam" id="PF00108">
    <property type="entry name" value="Thiolase_N"/>
    <property type="match status" value="1"/>
</dbReference>
<dbReference type="PIRSF" id="PIRSF000429">
    <property type="entry name" value="Ac-CoA_Ac_transf"/>
    <property type="match status" value="1"/>
</dbReference>
<dbReference type="SUPFAM" id="SSF53901">
    <property type="entry name" value="Thiolase-like"/>
    <property type="match status" value="2"/>
</dbReference>
<dbReference type="PROSITE" id="PS00098">
    <property type="entry name" value="THIOLASE_1"/>
    <property type="match status" value="1"/>
</dbReference>
<dbReference type="PROSITE" id="PS00737">
    <property type="entry name" value="THIOLASE_2"/>
    <property type="match status" value="1"/>
</dbReference>
<dbReference type="PROSITE" id="PS00099">
    <property type="entry name" value="THIOLASE_3"/>
    <property type="match status" value="1"/>
</dbReference>
<organism>
    <name type="scientific">Pseudoalteromonas atlantica (strain T6c / ATCC BAA-1087)</name>
    <dbReference type="NCBI Taxonomy" id="3042615"/>
    <lineage>
        <taxon>Bacteria</taxon>
        <taxon>Pseudomonadati</taxon>
        <taxon>Pseudomonadota</taxon>
        <taxon>Gammaproteobacteria</taxon>
        <taxon>Alteromonadales</taxon>
        <taxon>Alteromonadaceae</taxon>
        <taxon>Paraglaciecola</taxon>
    </lineage>
</organism>